<keyword id="KW-0548">Nucleotidyltransferase</keyword>
<keyword id="KW-0694">RNA-binding</keyword>
<keyword id="KW-0698">rRNA processing</keyword>
<keyword id="KW-0808">Transferase</keyword>
<keyword id="KW-0819">tRNA processing</keyword>
<keyword id="KW-0820">tRNA-binding</keyword>
<accession>Q01NZ9</accession>
<protein>
    <recommendedName>
        <fullName evidence="1">Ribonuclease PH</fullName>
        <shortName evidence="1">RNase PH</shortName>
        <ecNumber evidence="1">2.7.7.56</ecNumber>
    </recommendedName>
    <alternativeName>
        <fullName evidence="1">tRNA nucleotidyltransferase</fullName>
    </alternativeName>
</protein>
<sequence length="238" mass="25739">MRTDNRTAGQLRPVQITTGCLMTAEGSALIKVGNTHVLCAATIEDTVPPFLRNTGKGWVTAEYSMLPRATAKRTPREVTKGRPSGRTHEIQRLIGRSMRSAVDMSSFGERTLIIDCDVIQADGGTRTASITGAFVAMALAFRQLIEYRALKANPIRDYVAATSVGLVGGIPMLDLCYEEDSQADVDMNVVMTGGGKFVEVQATAEHSAFDDAQMAELTELARTGIAQLVRMQKEIIEG</sequence>
<organism>
    <name type="scientific">Solibacter usitatus (strain Ellin6076)</name>
    <dbReference type="NCBI Taxonomy" id="234267"/>
    <lineage>
        <taxon>Bacteria</taxon>
        <taxon>Pseudomonadati</taxon>
        <taxon>Acidobacteriota</taxon>
        <taxon>Terriglobia</taxon>
        <taxon>Bryobacterales</taxon>
        <taxon>Solibacteraceae</taxon>
        <taxon>Candidatus Solibacter</taxon>
    </lineage>
</organism>
<gene>
    <name evidence="1" type="primary">rph</name>
    <name type="ordered locus">Acid_7723</name>
</gene>
<evidence type="ECO:0000255" key="1">
    <source>
        <dbReference type="HAMAP-Rule" id="MF_00564"/>
    </source>
</evidence>
<name>RNPH_SOLUE</name>
<proteinExistence type="inferred from homology"/>
<feature type="chain" id="PRO_1000024897" description="Ribonuclease PH">
    <location>
        <begin position="1"/>
        <end position="238"/>
    </location>
</feature>
<feature type="binding site" evidence="1">
    <location>
        <position position="86"/>
    </location>
    <ligand>
        <name>phosphate</name>
        <dbReference type="ChEBI" id="CHEBI:43474"/>
        <note>substrate</note>
    </ligand>
</feature>
<feature type="binding site" evidence="1">
    <location>
        <begin position="124"/>
        <end position="126"/>
    </location>
    <ligand>
        <name>phosphate</name>
        <dbReference type="ChEBI" id="CHEBI:43474"/>
        <note>substrate</note>
    </ligand>
</feature>
<reference key="1">
    <citation type="journal article" date="2009" name="Appl. Environ. Microbiol.">
        <title>Three genomes from the phylum Acidobacteria provide insight into the lifestyles of these microorganisms in soils.</title>
        <authorList>
            <person name="Ward N.L."/>
            <person name="Challacombe J.F."/>
            <person name="Janssen P.H."/>
            <person name="Henrissat B."/>
            <person name="Coutinho P.M."/>
            <person name="Wu M."/>
            <person name="Xie G."/>
            <person name="Haft D.H."/>
            <person name="Sait M."/>
            <person name="Badger J."/>
            <person name="Barabote R.D."/>
            <person name="Bradley B."/>
            <person name="Brettin T.S."/>
            <person name="Brinkac L.M."/>
            <person name="Bruce D."/>
            <person name="Creasy T."/>
            <person name="Daugherty S.C."/>
            <person name="Davidsen T.M."/>
            <person name="DeBoy R.T."/>
            <person name="Detter J.C."/>
            <person name="Dodson R.J."/>
            <person name="Durkin A.S."/>
            <person name="Ganapathy A."/>
            <person name="Gwinn-Giglio M."/>
            <person name="Han C.S."/>
            <person name="Khouri H."/>
            <person name="Kiss H."/>
            <person name="Kothari S.P."/>
            <person name="Madupu R."/>
            <person name="Nelson K.E."/>
            <person name="Nelson W.C."/>
            <person name="Paulsen I."/>
            <person name="Penn K."/>
            <person name="Ren Q."/>
            <person name="Rosovitz M.J."/>
            <person name="Selengut J.D."/>
            <person name="Shrivastava S."/>
            <person name="Sullivan S.A."/>
            <person name="Tapia R."/>
            <person name="Thompson L.S."/>
            <person name="Watkins K.L."/>
            <person name="Yang Q."/>
            <person name="Yu C."/>
            <person name="Zafar N."/>
            <person name="Zhou L."/>
            <person name="Kuske C.R."/>
        </authorList>
    </citation>
    <scope>NUCLEOTIDE SEQUENCE [LARGE SCALE GENOMIC DNA]</scope>
    <source>
        <strain>Ellin6076</strain>
    </source>
</reference>
<comment type="function">
    <text evidence="1">Phosphorolytic 3'-5' exoribonuclease that plays an important role in tRNA 3'-end maturation. Removes nucleotide residues following the 3'-CCA terminus of tRNAs; can also add nucleotides to the ends of RNA molecules by using nucleoside diphosphates as substrates, but this may not be physiologically important. Probably plays a role in initiation of 16S rRNA degradation (leading to ribosome degradation) during starvation.</text>
</comment>
<comment type="catalytic activity">
    <reaction evidence="1">
        <text>tRNA(n+1) + phosphate = tRNA(n) + a ribonucleoside 5'-diphosphate</text>
        <dbReference type="Rhea" id="RHEA:10628"/>
        <dbReference type="Rhea" id="RHEA-COMP:17343"/>
        <dbReference type="Rhea" id="RHEA-COMP:17344"/>
        <dbReference type="ChEBI" id="CHEBI:43474"/>
        <dbReference type="ChEBI" id="CHEBI:57930"/>
        <dbReference type="ChEBI" id="CHEBI:173114"/>
        <dbReference type="EC" id="2.7.7.56"/>
    </reaction>
</comment>
<comment type="subunit">
    <text evidence="1">Homohexameric ring arranged as a trimer of dimers.</text>
</comment>
<comment type="similarity">
    <text evidence="1">Belongs to the RNase PH family.</text>
</comment>
<dbReference type="EC" id="2.7.7.56" evidence="1"/>
<dbReference type="EMBL" id="CP000473">
    <property type="protein sequence ID" value="ABJ88621.1"/>
    <property type="molecule type" value="Genomic_DNA"/>
</dbReference>
<dbReference type="SMR" id="Q01NZ9"/>
<dbReference type="FunCoup" id="Q01NZ9">
    <property type="interactions" value="500"/>
</dbReference>
<dbReference type="STRING" id="234267.Acid_7723"/>
<dbReference type="KEGG" id="sus:Acid_7723"/>
<dbReference type="eggNOG" id="COG0689">
    <property type="taxonomic scope" value="Bacteria"/>
</dbReference>
<dbReference type="HOGENOM" id="CLU_050858_0_0_0"/>
<dbReference type="InParanoid" id="Q01NZ9"/>
<dbReference type="OrthoDB" id="9802265at2"/>
<dbReference type="GO" id="GO:0000175">
    <property type="term" value="F:3'-5'-RNA exonuclease activity"/>
    <property type="evidence" value="ECO:0007669"/>
    <property type="project" value="UniProtKB-UniRule"/>
</dbReference>
<dbReference type="GO" id="GO:0000049">
    <property type="term" value="F:tRNA binding"/>
    <property type="evidence" value="ECO:0007669"/>
    <property type="project" value="UniProtKB-UniRule"/>
</dbReference>
<dbReference type="GO" id="GO:0009022">
    <property type="term" value="F:tRNA nucleotidyltransferase activity"/>
    <property type="evidence" value="ECO:0007669"/>
    <property type="project" value="UniProtKB-UniRule"/>
</dbReference>
<dbReference type="GO" id="GO:0016075">
    <property type="term" value="P:rRNA catabolic process"/>
    <property type="evidence" value="ECO:0007669"/>
    <property type="project" value="UniProtKB-UniRule"/>
</dbReference>
<dbReference type="GO" id="GO:0006364">
    <property type="term" value="P:rRNA processing"/>
    <property type="evidence" value="ECO:0007669"/>
    <property type="project" value="UniProtKB-KW"/>
</dbReference>
<dbReference type="GO" id="GO:0008033">
    <property type="term" value="P:tRNA processing"/>
    <property type="evidence" value="ECO:0007669"/>
    <property type="project" value="UniProtKB-UniRule"/>
</dbReference>
<dbReference type="CDD" id="cd11362">
    <property type="entry name" value="RNase_PH_bact"/>
    <property type="match status" value="1"/>
</dbReference>
<dbReference type="FunFam" id="3.30.230.70:FF:000003">
    <property type="entry name" value="Ribonuclease PH"/>
    <property type="match status" value="1"/>
</dbReference>
<dbReference type="Gene3D" id="3.30.230.70">
    <property type="entry name" value="GHMP Kinase, N-terminal domain"/>
    <property type="match status" value="1"/>
</dbReference>
<dbReference type="HAMAP" id="MF_00564">
    <property type="entry name" value="RNase_PH"/>
    <property type="match status" value="1"/>
</dbReference>
<dbReference type="InterPro" id="IPR001247">
    <property type="entry name" value="ExoRNase_PH_dom1"/>
</dbReference>
<dbReference type="InterPro" id="IPR015847">
    <property type="entry name" value="ExoRNase_PH_dom2"/>
</dbReference>
<dbReference type="InterPro" id="IPR036345">
    <property type="entry name" value="ExoRNase_PH_dom2_sf"/>
</dbReference>
<dbReference type="InterPro" id="IPR027408">
    <property type="entry name" value="PNPase/RNase_PH_dom_sf"/>
</dbReference>
<dbReference type="InterPro" id="IPR020568">
    <property type="entry name" value="Ribosomal_Su5_D2-typ_SF"/>
</dbReference>
<dbReference type="InterPro" id="IPR050080">
    <property type="entry name" value="RNase_PH"/>
</dbReference>
<dbReference type="InterPro" id="IPR002381">
    <property type="entry name" value="RNase_PH_bac-type"/>
</dbReference>
<dbReference type="InterPro" id="IPR018336">
    <property type="entry name" value="RNase_PH_CS"/>
</dbReference>
<dbReference type="NCBIfam" id="TIGR01966">
    <property type="entry name" value="RNasePH"/>
    <property type="match status" value="1"/>
</dbReference>
<dbReference type="PANTHER" id="PTHR11953">
    <property type="entry name" value="EXOSOME COMPLEX COMPONENT"/>
    <property type="match status" value="1"/>
</dbReference>
<dbReference type="PANTHER" id="PTHR11953:SF0">
    <property type="entry name" value="EXOSOME COMPLEX COMPONENT RRP41"/>
    <property type="match status" value="1"/>
</dbReference>
<dbReference type="Pfam" id="PF01138">
    <property type="entry name" value="RNase_PH"/>
    <property type="match status" value="1"/>
</dbReference>
<dbReference type="Pfam" id="PF03725">
    <property type="entry name" value="RNase_PH_C"/>
    <property type="match status" value="1"/>
</dbReference>
<dbReference type="SUPFAM" id="SSF55666">
    <property type="entry name" value="Ribonuclease PH domain 2-like"/>
    <property type="match status" value="1"/>
</dbReference>
<dbReference type="SUPFAM" id="SSF54211">
    <property type="entry name" value="Ribosomal protein S5 domain 2-like"/>
    <property type="match status" value="1"/>
</dbReference>
<dbReference type="PROSITE" id="PS01277">
    <property type="entry name" value="RIBONUCLEASE_PH"/>
    <property type="match status" value="1"/>
</dbReference>